<protein>
    <recommendedName>
        <fullName evidence="2">Pimeloyl-[acyl-carrier protein] methyl ester esterase</fullName>
        <ecNumber evidence="2">3.1.1.85</ecNumber>
    </recommendedName>
    <alternativeName>
        <fullName evidence="2">Biotin synthesis protein BioH</fullName>
    </alternativeName>
    <alternativeName>
        <fullName evidence="2">Carboxylesterase BioH</fullName>
    </alternativeName>
</protein>
<proteinExistence type="inferred from homology"/>
<dbReference type="EC" id="3.1.1.85" evidence="2"/>
<dbReference type="EMBL" id="AP008232">
    <property type="protein sequence ID" value="BAE75599.1"/>
    <property type="molecule type" value="Genomic_DNA"/>
</dbReference>
<dbReference type="RefSeq" id="WP_011412131.1">
    <property type="nucleotide sequence ID" value="NC_007712.1"/>
</dbReference>
<dbReference type="SMR" id="Q2NQH6"/>
<dbReference type="STRING" id="343509.SG2324"/>
<dbReference type="ESTHER" id="sodgm-q2nqh6">
    <property type="family name" value="BioH"/>
</dbReference>
<dbReference type="KEGG" id="sgl:SG2324"/>
<dbReference type="eggNOG" id="COG2267">
    <property type="taxonomic scope" value="Bacteria"/>
</dbReference>
<dbReference type="HOGENOM" id="CLU_020336_12_2_6"/>
<dbReference type="OrthoDB" id="9780744at2"/>
<dbReference type="UniPathway" id="UPA00078"/>
<dbReference type="Proteomes" id="UP000001932">
    <property type="component" value="Chromosome"/>
</dbReference>
<dbReference type="GO" id="GO:0005737">
    <property type="term" value="C:cytoplasm"/>
    <property type="evidence" value="ECO:0007669"/>
    <property type="project" value="UniProtKB-SubCell"/>
</dbReference>
<dbReference type="GO" id="GO:0090499">
    <property type="term" value="F:pimelyl-[acyl-carrier protein] methyl ester esterase activity"/>
    <property type="evidence" value="ECO:0007669"/>
    <property type="project" value="UniProtKB-EC"/>
</dbReference>
<dbReference type="GO" id="GO:0009102">
    <property type="term" value="P:biotin biosynthetic process"/>
    <property type="evidence" value="ECO:0007669"/>
    <property type="project" value="UniProtKB-UniRule"/>
</dbReference>
<dbReference type="Gene3D" id="3.40.50.1820">
    <property type="entry name" value="alpha/beta hydrolase"/>
    <property type="match status" value="1"/>
</dbReference>
<dbReference type="HAMAP" id="MF_01260">
    <property type="entry name" value="Carboxylester"/>
    <property type="match status" value="1"/>
</dbReference>
<dbReference type="InterPro" id="IPR000073">
    <property type="entry name" value="AB_hydrolase_1"/>
</dbReference>
<dbReference type="InterPro" id="IPR029058">
    <property type="entry name" value="AB_hydrolase_fold"/>
</dbReference>
<dbReference type="InterPro" id="IPR010076">
    <property type="entry name" value="BioH"/>
</dbReference>
<dbReference type="InterPro" id="IPR050228">
    <property type="entry name" value="Carboxylesterase_BioH"/>
</dbReference>
<dbReference type="NCBIfam" id="TIGR01738">
    <property type="entry name" value="bioH"/>
    <property type="match status" value="1"/>
</dbReference>
<dbReference type="PANTHER" id="PTHR43194">
    <property type="entry name" value="HYDROLASE ALPHA/BETA FOLD FAMILY"/>
    <property type="match status" value="1"/>
</dbReference>
<dbReference type="PANTHER" id="PTHR43194:SF5">
    <property type="entry name" value="PIMELOYL-[ACYL-CARRIER PROTEIN] METHYL ESTER ESTERASE"/>
    <property type="match status" value="1"/>
</dbReference>
<dbReference type="Pfam" id="PF00561">
    <property type="entry name" value="Abhydrolase_1"/>
    <property type="match status" value="1"/>
</dbReference>
<dbReference type="SUPFAM" id="SSF53474">
    <property type="entry name" value="alpha/beta-Hydrolases"/>
    <property type="match status" value="1"/>
</dbReference>
<organism>
    <name type="scientific">Sodalis glossinidius (strain morsitans)</name>
    <dbReference type="NCBI Taxonomy" id="343509"/>
    <lineage>
        <taxon>Bacteria</taxon>
        <taxon>Pseudomonadati</taxon>
        <taxon>Pseudomonadota</taxon>
        <taxon>Gammaproteobacteria</taxon>
        <taxon>Enterobacterales</taxon>
        <taxon>Bruguierivoracaceae</taxon>
        <taxon>Sodalis</taxon>
    </lineage>
</organism>
<sequence length="257" mass="27985">MVSLFWQTTGTGDRDLVLLHGWGLNAEVWSYIVPRLATHFRLHLVDLPGYGRSRGYGALTLEEMAEEVASRAPHGALWLGWSLGGLVATTVARRCPHAVAGLVTVASSPRFCADGDWPGIRPEVLEGFARELRQDFTRTVSRFLGLQTLGTASARQDTRWLKSVVLAHPAPAIEVLTGGLALLRTSDVRKALDQLDVPLLRLYGYLDGLVPRKVVPLVDELSTASHSIVFAGAAHAPFISHPVPFCQALCDFSQLES</sequence>
<keyword id="KW-0093">Biotin biosynthesis</keyword>
<keyword id="KW-0963">Cytoplasm</keyword>
<keyword id="KW-0378">Hydrolase</keyword>
<keyword id="KW-0719">Serine esterase</keyword>
<comment type="function">
    <text evidence="2">The physiological role of BioH is to remove the methyl group introduced by BioC when the pimeloyl moiety is complete. It allows to synthesize pimeloyl-ACP via the fatty acid synthetic pathway through the hydrolysis of the ester bonds of pimeloyl-ACP esters.</text>
</comment>
<comment type="catalytic activity">
    <reaction evidence="2">
        <text>6-carboxyhexanoyl-[ACP] methyl ester + H2O = 6-carboxyhexanoyl-[ACP] + methanol + H(+)</text>
        <dbReference type="Rhea" id="RHEA:42700"/>
        <dbReference type="Rhea" id="RHEA-COMP:9955"/>
        <dbReference type="Rhea" id="RHEA-COMP:10186"/>
        <dbReference type="ChEBI" id="CHEBI:15377"/>
        <dbReference type="ChEBI" id="CHEBI:15378"/>
        <dbReference type="ChEBI" id="CHEBI:17790"/>
        <dbReference type="ChEBI" id="CHEBI:78846"/>
        <dbReference type="ChEBI" id="CHEBI:82735"/>
        <dbReference type="EC" id="3.1.1.85"/>
    </reaction>
</comment>
<comment type="pathway">
    <text evidence="2">Cofactor biosynthesis; biotin biosynthesis.</text>
</comment>
<comment type="subunit">
    <text evidence="2">Monomer.</text>
</comment>
<comment type="subcellular location">
    <subcellularLocation>
        <location evidence="2">Cytoplasm</location>
    </subcellularLocation>
</comment>
<comment type="similarity">
    <text evidence="2">Belongs to the AB hydrolase superfamily. Carboxylesterase BioH family.</text>
</comment>
<name>BIOH_SODGM</name>
<evidence type="ECO:0000255" key="1"/>
<evidence type="ECO:0000255" key="2">
    <source>
        <dbReference type="HAMAP-Rule" id="MF_01260"/>
    </source>
</evidence>
<gene>
    <name evidence="2" type="primary">bioH</name>
    <name type="ordered locus">SG2324</name>
</gene>
<reference key="1">
    <citation type="journal article" date="2006" name="Genome Res.">
        <title>Massive genome erosion and functional adaptations provide insights into the symbiotic lifestyle of Sodalis glossinidius in the tsetse host.</title>
        <authorList>
            <person name="Toh H."/>
            <person name="Weiss B.L."/>
            <person name="Perkin S.A.H."/>
            <person name="Yamashita A."/>
            <person name="Oshima K."/>
            <person name="Hattori M."/>
            <person name="Aksoy S."/>
        </authorList>
    </citation>
    <scope>NUCLEOTIDE SEQUENCE [LARGE SCALE GENOMIC DNA]</scope>
    <source>
        <strain>morsitans</strain>
    </source>
</reference>
<accession>Q2NQH6</accession>
<feature type="chain" id="PRO_1000067279" description="Pimeloyl-[acyl-carrier protein] methyl ester esterase">
    <location>
        <begin position="1"/>
        <end position="257"/>
    </location>
</feature>
<feature type="domain" description="AB hydrolase-1" evidence="1">
    <location>
        <begin position="16"/>
        <end position="242"/>
    </location>
</feature>
<feature type="active site" description="Nucleophile" evidence="2">
    <location>
        <position position="82"/>
    </location>
</feature>
<feature type="active site" evidence="2">
    <location>
        <position position="207"/>
    </location>
</feature>
<feature type="active site" evidence="2">
    <location>
        <position position="235"/>
    </location>
</feature>
<feature type="binding site" evidence="2">
    <location>
        <position position="22"/>
    </location>
    <ligand>
        <name>substrate</name>
    </ligand>
</feature>
<feature type="binding site" evidence="2">
    <location>
        <begin position="82"/>
        <end position="83"/>
    </location>
    <ligand>
        <name>substrate</name>
    </ligand>
</feature>
<feature type="binding site" evidence="2">
    <location>
        <begin position="143"/>
        <end position="147"/>
    </location>
    <ligand>
        <name>substrate</name>
    </ligand>
</feature>
<feature type="binding site" evidence="2">
    <location>
        <position position="235"/>
    </location>
    <ligand>
        <name>substrate</name>
    </ligand>
</feature>